<accession>A1AEZ3</accession>
<feature type="chain" id="PRO_0000314514" description="Ribosomal RNA large subunit methyltransferase M">
    <location>
        <begin position="1"/>
        <end position="366"/>
    </location>
</feature>
<feature type="active site" description="Proton acceptor" evidence="1">
    <location>
        <position position="306"/>
    </location>
</feature>
<feature type="binding site" evidence="1">
    <location>
        <position position="188"/>
    </location>
    <ligand>
        <name>S-adenosyl-L-methionine</name>
        <dbReference type="ChEBI" id="CHEBI:59789"/>
    </ligand>
</feature>
<feature type="binding site" evidence="1">
    <location>
        <begin position="221"/>
        <end position="224"/>
    </location>
    <ligand>
        <name>S-adenosyl-L-methionine</name>
        <dbReference type="ChEBI" id="CHEBI:59789"/>
    </ligand>
</feature>
<feature type="binding site" evidence="1">
    <location>
        <position position="240"/>
    </location>
    <ligand>
        <name>S-adenosyl-L-methionine</name>
        <dbReference type="ChEBI" id="CHEBI:59789"/>
    </ligand>
</feature>
<feature type="binding site" evidence="1">
    <location>
        <position position="260"/>
    </location>
    <ligand>
        <name>S-adenosyl-L-methionine</name>
        <dbReference type="ChEBI" id="CHEBI:59789"/>
    </ligand>
</feature>
<feature type="binding site" evidence="1">
    <location>
        <position position="277"/>
    </location>
    <ligand>
        <name>S-adenosyl-L-methionine</name>
        <dbReference type="ChEBI" id="CHEBI:59789"/>
    </ligand>
</feature>
<dbReference type="EC" id="2.1.1.186" evidence="1"/>
<dbReference type="EMBL" id="CP000468">
    <property type="protein sequence ID" value="ABJ02233.1"/>
    <property type="molecule type" value="Genomic_DNA"/>
</dbReference>
<dbReference type="RefSeq" id="WP_001045527.1">
    <property type="nucleotide sequence ID" value="NZ_CADILS010000024.1"/>
</dbReference>
<dbReference type="SMR" id="A1AEZ3"/>
<dbReference type="KEGG" id="ecv:APECO1_3725"/>
<dbReference type="HOGENOM" id="CLU_043780_0_0_6"/>
<dbReference type="Proteomes" id="UP000008216">
    <property type="component" value="Chromosome"/>
</dbReference>
<dbReference type="GO" id="GO:0005737">
    <property type="term" value="C:cytoplasm"/>
    <property type="evidence" value="ECO:0007669"/>
    <property type="project" value="UniProtKB-SubCell"/>
</dbReference>
<dbReference type="GO" id="GO:0008757">
    <property type="term" value="F:S-adenosylmethionine-dependent methyltransferase activity"/>
    <property type="evidence" value="ECO:0007669"/>
    <property type="project" value="UniProtKB-UniRule"/>
</dbReference>
<dbReference type="GO" id="GO:0032259">
    <property type="term" value="P:methylation"/>
    <property type="evidence" value="ECO:0007669"/>
    <property type="project" value="UniProtKB-KW"/>
</dbReference>
<dbReference type="GO" id="GO:0006364">
    <property type="term" value="P:rRNA processing"/>
    <property type="evidence" value="ECO:0007669"/>
    <property type="project" value="UniProtKB-UniRule"/>
</dbReference>
<dbReference type="FunFam" id="3.30.2300.20:FF:000001">
    <property type="entry name" value="Ribosomal RNA large subunit methyltransferase M"/>
    <property type="match status" value="1"/>
</dbReference>
<dbReference type="FunFam" id="3.30.70.2810:FF:000001">
    <property type="entry name" value="Ribosomal RNA large subunit methyltransferase M"/>
    <property type="match status" value="1"/>
</dbReference>
<dbReference type="FunFam" id="3.40.50.150:FF:000020">
    <property type="entry name" value="Ribosomal RNA large subunit methyltransferase M"/>
    <property type="match status" value="1"/>
</dbReference>
<dbReference type="Gene3D" id="3.30.2300.20">
    <property type="match status" value="1"/>
</dbReference>
<dbReference type="Gene3D" id="3.30.70.2810">
    <property type="match status" value="1"/>
</dbReference>
<dbReference type="Gene3D" id="3.40.50.150">
    <property type="entry name" value="Vaccinia Virus protein VP39"/>
    <property type="match status" value="1"/>
</dbReference>
<dbReference type="HAMAP" id="MF_01551">
    <property type="entry name" value="23SrRNA_methyltr_M"/>
    <property type="match status" value="1"/>
</dbReference>
<dbReference type="InterPro" id="IPR040739">
    <property type="entry name" value="RlmM_FDX"/>
</dbReference>
<dbReference type="InterPro" id="IPR048646">
    <property type="entry name" value="RlmM_THUMP-like"/>
</dbReference>
<dbReference type="InterPro" id="IPR002877">
    <property type="entry name" value="RNA_MeTrfase_FtsJ_dom"/>
</dbReference>
<dbReference type="InterPro" id="IPR011224">
    <property type="entry name" value="rRNA_MeTrfase_M"/>
</dbReference>
<dbReference type="InterPro" id="IPR029063">
    <property type="entry name" value="SAM-dependent_MTases_sf"/>
</dbReference>
<dbReference type="NCBIfam" id="NF008734">
    <property type="entry name" value="PRK11760.1"/>
    <property type="match status" value="1"/>
</dbReference>
<dbReference type="PANTHER" id="PTHR37524">
    <property type="entry name" value="RIBOSOMAL RNA LARGE SUBUNIT METHYLTRANSFERASE M"/>
    <property type="match status" value="1"/>
</dbReference>
<dbReference type="PANTHER" id="PTHR37524:SF2">
    <property type="entry name" value="RIBOSOMAL RNA METHYLTRANSFERASE FTSJ DOMAIN-CONTAINING PROTEIN"/>
    <property type="match status" value="1"/>
</dbReference>
<dbReference type="Pfam" id="PF01728">
    <property type="entry name" value="FtsJ"/>
    <property type="match status" value="1"/>
</dbReference>
<dbReference type="Pfam" id="PF18125">
    <property type="entry name" value="RlmM_FDX"/>
    <property type="match status" value="1"/>
</dbReference>
<dbReference type="Pfam" id="PF21239">
    <property type="entry name" value="RLMM_N"/>
    <property type="match status" value="1"/>
</dbReference>
<dbReference type="PIRSF" id="PIRSF028774">
    <property type="entry name" value="UCP028774"/>
    <property type="match status" value="1"/>
</dbReference>
<dbReference type="SUPFAM" id="SSF53335">
    <property type="entry name" value="S-adenosyl-L-methionine-dependent methyltransferases"/>
    <property type="match status" value="1"/>
</dbReference>
<comment type="function">
    <text evidence="1">Catalyzes the 2'-O-methylation at nucleotide C2498 in 23S rRNA.</text>
</comment>
<comment type="catalytic activity">
    <reaction evidence="1">
        <text>cytidine(2498) in 23S rRNA + S-adenosyl-L-methionine = 2'-O-methylcytidine(2498) in 23S rRNA + S-adenosyl-L-homocysteine + H(+)</text>
        <dbReference type="Rhea" id="RHEA:42788"/>
        <dbReference type="Rhea" id="RHEA-COMP:10244"/>
        <dbReference type="Rhea" id="RHEA-COMP:10245"/>
        <dbReference type="ChEBI" id="CHEBI:15378"/>
        <dbReference type="ChEBI" id="CHEBI:57856"/>
        <dbReference type="ChEBI" id="CHEBI:59789"/>
        <dbReference type="ChEBI" id="CHEBI:74495"/>
        <dbReference type="ChEBI" id="CHEBI:82748"/>
        <dbReference type="EC" id="2.1.1.186"/>
    </reaction>
</comment>
<comment type="subunit">
    <text evidence="1">Monomer.</text>
</comment>
<comment type="subcellular location">
    <subcellularLocation>
        <location evidence="1">Cytoplasm</location>
    </subcellularLocation>
</comment>
<comment type="similarity">
    <text evidence="1">Belongs to the class I-like SAM-binding methyltransferase superfamily. RNA methyltransferase RlmE family. RlmM subfamily.</text>
</comment>
<gene>
    <name evidence="1" type="primary">rlmM</name>
    <name type="ordered locus">Ecok1_27390</name>
    <name type="ORF">APECO1_3725</name>
</gene>
<proteinExistence type="inferred from homology"/>
<keyword id="KW-0963">Cytoplasm</keyword>
<keyword id="KW-0489">Methyltransferase</keyword>
<keyword id="KW-1185">Reference proteome</keyword>
<keyword id="KW-0698">rRNA processing</keyword>
<keyword id="KW-0949">S-adenosyl-L-methionine</keyword>
<keyword id="KW-0808">Transferase</keyword>
<name>RLMM_ECOK1</name>
<sequence>MNKVVLLCRPGFEKECAAEITDKAGQREIFGFARVKENAGYVIYECYQPDDGDKLIRELPFSSLIFARQWFVVGELLQHLPPEDRITPIVGMLQGVVEKGGELRVEVADTNESKELLKFCRKFTVPLRAALRDAGVLANYETPKRPVVHVFFIAPGCCYTGYSYSSNNSPFYMGIPRLKFPADAPSRSTLKLEEAFHVFIPADEWDERLANGMWAVDLGACPGGWTYQLVKRNMWVYSVDNGPMAQSLMDTGQVTWLREDGFKFRPTCSNISWMVCDMVEKPAKVAALMAQWLVNGWCRETIFNLKLPMKKRYEEVSHNLAYIQAQLDEHGINAQIQARQLYHDREEVTVHVRRIWAAVGGRRDER</sequence>
<reference key="1">
    <citation type="journal article" date="2007" name="J. Bacteriol.">
        <title>The genome sequence of avian pathogenic Escherichia coli strain O1:K1:H7 shares strong similarities with human extraintestinal pathogenic E. coli genomes.</title>
        <authorList>
            <person name="Johnson T.J."/>
            <person name="Kariyawasam S."/>
            <person name="Wannemuehler Y."/>
            <person name="Mangiamele P."/>
            <person name="Johnson S.J."/>
            <person name="Doetkott C."/>
            <person name="Skyberg J.A."/>
            <person name="Lynne A.M."/>
            <person name="Johnson J.R."/>
            <person name="Nolan L.K."/>
        </authorList>
    </citation>
    <scope>NUCLEOTIDE SEQUENCE [LARGE SCALE GENOMIC DNA]</scope>
</reference>
<organism>
    <name type="scientific">Escherichia coli O1:K1 / APEC</name>
    <dbReference type="NCBI Taxonomy" id="405955"/>
    <lineage>
        <taxon>Bacteria</taxon>
        <taxon>Pseudomonadati</taxon>
        <taxon>Pseudomonadota</taxon>
        <taxon>Gammaproteobacteria</taxon>
        <taxon>Enterobacterales</taxon>
        <taxon>Enterobacteriaceae</taxon>
        <taxon>Escherichia</taxon>
    </lineage>
</organism>
<evidence type="ECO:0000255" key="1">
    <source>
        <dbReference type="HAMAP-Rule" id="MF_01551"/>
    </source>
</evidence>
<protein>
    <recommendedName>
        <fullName evidence="1">Ribosomal RNA large subunit methyltransferase M</fullName>
        <ecNumber evidence="1">2.1.1.186</ecNumber>
    </recommendedName>
    <alternativeName>
        <fullName evidence="1">23S rRNA (cytidine2498-2'-O)-methyltransferase</fullName>
    </alternativeName>
    <alternativeName>
        <fullName evidence="1">23S rRNA 2'-O-ribose methyltransferase RlmM</fullName>
    </alternativeName>
</protein>